<sequence>MFGLINIGFGNVIAGDRIVAIVNPESAPLKRLKEDAKEEGKLIDATYGRKTRAILISDSNHIILSAIQPETIAQRFMQSFFEIEEQLERIRRKG</sequence>
<gene>
    <name type="ordered locus">Tmel_0100</name>
</gene>
<protein>
    <recommendedName>
        <fullName evidence="1">Putative regulatory protein Tmel_0100</fullName>
    </recommendedName>
</protein>
<name>Y100_THEM4</name>
<reference key="1">
    <citation type="submission" date="2007-05" db="EMBL/GenBank/DDBJ databases">
        <title>Complete sequence of Thermosipho melanesiensis BI429.</title>
        <authorList>
            <consortium name="US DOE Joint Genome Institute"/>
            <person name="Copeland A."/>
            <person name="Lucas S."/>
            <person name="Lapidus A."/>
            <person name="Barry K."/>
            <person name="Glavina del Rio T."/>
            <person name="Dalin E."/>
            <person name="Tice H."/>
            <person name="Pitluck S."/>
            <person name="Chertkov O."/>
            <person name="Brettin T."/>
            <person name="Bruce D."/>
            <person name="Detter J.C."/>
            <person name="Han C."/>
            <person name="Schmutz J."/>
            <person name="Larimer F."/>
            <person name="Land M."/>
            <person name="Hauser L."/>
            <person name="Kyrpides N."/>
            <person name="Mikhailova N."/>
            <person name="Nelson K."/>
            <person name="Gogarten J.P."/>
            <person name="Noll K."/>
            <person name="Richardson P."/>
        </authorList>
    </citation>
    <scope>NUCLEOTIDE SEQUENCE [LARGE SCALE GENOMIC DNA]</scope>
    <source>
        <strain>DSM 12029 / CIP 104789 / BI429</strain>
    </source>
</reference>
<dbReference type="EMBL" id="CP000716">
    <property type="protein sequence ID" value="ABR29977.1"/>
    <property type="molecule type" value="Genomic_DNA"/>
</dbReference>
<dbReference type="RefSeq" id="WP_012056339.1">
    <property type="nucleotide sequence ID" value="NC_009616.1"/>
</dbReference>
<dbReference type="SMR" id="A6LJ76"/>
<dbReference type="STRING" id="391009.Tmel_0100"/>
<dbReference type="KEGG" id="tme:Tmel_0100"/>
<dbReference type="eggNOG" id="COG2052">
    <property type="taxonomic scope" value="Bacteria"/>
</dbReference>
<dbReference type="HOGENOM" id="CLU_165326_0_0_0"/>
<dbReference type="OrthoDB" id="5432174at2"/>
<dbReference type="Proteomes" id="UP000001110">
    <property type="component" value="Chromosome"/>
</dbReference>
<dbReference type="HAMAP" id="MF_01503">
    <property type="entry name" value="RemA"/>
    <property type="match status" value="1"/>
</dbReference>
<dbReference type="InterPro" id="IPR007169">
    <property type="entry name" value="RemA-like"/>
</dbReference>
<dbReference type="NCBIfam" id="NF003315">
    <property type="entry name" value="PRK04323.1"/>
    <property type="match status" value="1"/>
</dbReference>
<dbReference type="PANTHER" id="PTHR38449:SF1">
    <property type="entry name" value="REGULATORY PROTEIN SSL2874-RELATED"/>
    <property type="match status" value="1"/>
</dbReference>
<dbReference type="PANTHER" id="PTHR38449">
    <property type="entry name" value="REGULATORY PROTEIN TM_1690-RELATED"/>
    <property type="match status" value="1"/>
</dbReference>
<dbReference type="Pfam" id="PF04025">
    <property type="entry name" value="RemA-like"/>
    <property type="match status" value="1"/>
</dbReference>
<accession>A6LJ76</accession>
<evidence type="ECO:0000255" key="1">
    <source>
        <dbReference type="HAMAP-Rule" id="MF_01503"/>
    </source>
</evidence>
<feature type="chain" id="PRO_1000024479" description="Putative regulatory protein Tmel_0100">
    <location>
        <begin position="1"/>
        <end position="94"/>
    </location>
</feature>
<comment type="similarity">
    <text evidence="1">Belongs to the RemA family.</text>
</comment>
<organism>
    <name type="scientific">Thermosipho melanesiensis (strain DSM 12029 / CIP 104789 / BI429)</name>
    <dbReference type="NCBI Taxonomy" id="391009"/>
    <lineage>
        <taxon>Bacteria</taxon>
        <taxon>Thermotogati</taxon>
        <taxon>Thermotogota</taxon>
        <taxon>Thermotogae</taxon>
        <taxon>Thermotogales</taxon>
        <taxon>Fervidobacteriaceae</taxon>
        <taxon>Thermosipho</taxon>
    </lineage>
</organism>
<proteinExistence type="inferred from homology"/>